<keyword id="KW-0325">Glycoprotein</keyword>
<keyword id="KW-0654">Proteoglycan</keyword>
<keyword id="KW-1185">Reference proteome</keyword>
<keyword id="KW-0732">Signal</keyword>
<gene>
    <name evidence="6" type="primary">cpg-4</name>
    <name type="ORF">C10F3.1</name>
</gene>
<organism>
    <name type="scientific">Caenorhabditis elegans</name>
    <dbReference type="NCBI Taxonomy" id="6239"/>
    <lineage>
        <taxon>Eukaryota</taxon>
        <taxon>Metazoa</taxon>
        <taxon>Ecdysozoa</taxon>
        <taxon>Nematoda</taxon>
        <taxon>Chromadorea</taxon>
        <taxon>Rhabditida</taxon>
        <taxon>Rhabditina</taxon>
        <taxon>Rhabditomorpha</taxon>
        <taxon>Rhabditoidea</taxon>
        <taxon>Rhabditidae</taxon>
        <taxon>Peloderinae</taxon>
        <taxon>Caenorhabditis</taxon>
    </lineage>
</organism>
<accession>O16883</accession>
<evidence type="ECO:0000255" key="1"/>
<evidence type="ECO:0000256" key="2">
    <source>
        <dbReference type="SAM" id="MobiDB-lite"/>
    </source>
</evidence>
<evidence type="ECO:0000269" key="3">
    <source>
    </source>
</evidence>
<evidence type="ECO:0000305" key="4"/>
<evidence type="ECO:0000312" key="5">
    <source>
        <dbReference type="EMBL" id="ABC65814.1"/>
    </source>
</evidence>
<evidence type="ECO:0000312" key="6">
    <source>
        <dbReference type="WormBase" id="C10F3.1"/>
    </source>
</evidence>
<feature type="signal peptide" evidence="1">
    <location>
        <begin position="1"/>
        <end position="18"/>
    </location>
</feature>
<feature type="chain" id="PRO_0000320224" description="Chondroitin proteoglycan 4">
    <location>
        <begin position="19"/>
        <end position="782"/>
    </location>
</feature>
<feature type="region of interest" description="Disordered" evidence="2">
    <location>
        <begin position="513"/>
        <end position="726"/>
    </location>
</feature>
<feature type="compositionally biased region" description="Low complexity" evidence="2">
    <location>
        <begin position="520"/>
        <end position="532"/>
    </location>
</feature>
<feature type="compositionally biased region" description="Low complexity" evidence="2">
    <location>
        <begin position="548"/>
        <end position="566"/>
    </location>
</feature>
<feature type="compositionally biased region" description="Low complexity" evidence="2">
    <location>
        <begin position="573"/>
        <end position="612"/>
    </location>
</feature>
<feature type="compositionally biased region" description="Low complexity" evidence="2">
    <location>
        <begin position="662"/>
        <end position="672"/>
    </location>
</feature>
<feature type="compositionally biased region" description="Low complexity" evidence="2">
    <location>
        <begin position="688"/>
        <end position="722"/>
    </location>
</feature>
<feature type="glycosylation site" description="N-linked (GlcNAc...) asparagine" evidence="1">
    <location>
        <position position="76"/>
    </location>
</feature>
<feature type="glycosylation site" description="N-linked (GlcNAc...) asparagine" evidence="1">
    <location>
        <position position="208"/>
    </location>
</feature>
<feature type="glycosylation site" description="N-linked (GlcNAc...) asparagine" evidence="1">
    <location>
        <position position="462"/>
    </location>
</feature>
<feature type="glycosylation site" description="N-linked (GlcNAc...) asparagine" evidence="1">
    <location>
        <position position="468"/>
    </location>
</feature>
<feature type="glycosylation site" description="N-linked (GlcNAc...) asparagine" evidence="1">
    <location>
        <position position="474"/>
    </location>
</feature>
<feature type="glycosylation site" description="N-linked (GlcNAc...) asparagine" evidence="1">
    <location>
        <position position="503"/>
    </location>
</feature>
<feature type="glycosylation site" description="N-linked (GlcNAc...) asparagine" evidence="1">
    <location>
        <position position="559"/>
    </location>
</feature>
<feature type="glycosylation site" description="O-linked (Xyl...) (chondroitin sulfate) serine" evidence="3">
    <location>
        <position position="691"/>
    </location>
</feature>
<feature type="glycosylation site" description="N-linked (GlcNAc...) asparagine" evidence="1">
    <location>
        <position position="699"/>
    </location>
</feature>
<feature type="glycosylation site" description="O-linked (Xyl...) (chondroitin sulfate) serine" evidence="3">
    <location>
        <position position="701"/>
    </location>
</feature>
<feature type="glycosylation site" description="O-linked (Xyl...) (chondroitin sulfate) serine" evidence="3">
    <location>
        <position position="704"/>
    </location>
</feature>
<feature type="glycosylation site" description="O-linked (Xyl...) (chondroitin sulfate) serine" evidence="3">
    <location>
        <position position="708"/>
    </location>
</feature>
<feature type="glycosylation site" description="O-linked (Xyl...) (chondroitin sulfate) serine" evidence="3">
    <location>
        <position position="714"/>
    </location>
</feature>
<feature type="glycosylation site" description="O-linked (Xyl...) (chondroitin sulfate) serine" evidence="3">
    <location>
        <position position="721"/>
    </location>
</feature>
<feature type="glycosylation site" description="N-linked (GlcNAc...) asparagine" evidence="1">
    <location>
        <position position="743"/>
    </location>
</feature>
<name>CPG4_CAEEL</name>
<reference evidence="4 5" key="1">
    <citation type="journal article" date="2006" name="J. Cell Biol.">
        <title>Identification of novel chondroitin proteoglycans in Caenorhabditis elegans: embryonic cell division depends on CPG-1 and CPG-2.</title>
        <authorList>
            <person name="Olson S.K."/>
            <person name="Bishop J.R."/>
            <person name="Yates J.R."/>
            <person name="Oegema K."/>
            <person name="Esko J.D."/>
        </authorList>
    </citation>
    <scope>NUCLEOTIDE SEQUENCE [MRNA]</scope>
    <scope>IDENTIFICATION BY MASS SPECTROMETRY</scope>
    <scope>GLYCOSYLATION AT SER-691; SER-701; SER-704; SER-708; SER-714 AND SER-721</scope>
</reference>
<reference key="2">
    <citation type="journal article" date="1998" name="Science">
        <title>Genome sequence of the nematode C. elegans: a platform for investigating biology.</title>
        <authorList>
            <consortium name="The C. elegans sequencing consortium"/>
        </authorList>
    </citation>
    <scope>NUCLEOTIDE SEQUENCE [LARGE SCALE GENOMIC DNA]</scope>
    <source>
        <strain>Bristol N2</strain>
    </source>
</reference>
<protein>
    <recommendedName>
        <fullName>Chondroitin proteoglycan 4</fullName>
    </recommendedName>
</protein>
<sequence length="782" mass="83512">MRLVYSLIFLLFIPFSHPNPIPIPTISPETTNAYLRAFLPWWPEKTDFTLRTAPTPEESEAEIVGNLLESSGEKENVTEFATEKEEIDPSTLRVHDLPPSPLDEFAPEGSPKSLVASGARSSDGNFIISFDEMGECPRDCSNDLRDALGIILQDMSHVERYRQICGKYTNAITCVNEDTRCNKEDRDMFETMTSGLNYMCVEQKLAFNATIKCIDDEAGVVQSECDTQCQTKNLFMNWMMKTAFQDTIQQGVNGIVGAATGTNANPLAFLQPVAGAAGGAPGGGWADMLANIGQRPPSPQDAQQGFENFRQFTNDLCRIGDCMLDCIRSKFNTRCEGSAGTLLSEVFVRPIAATQNKLSILRPILGTFMPEQCGYLTNNAELKKHRIDATMDEELKRMYAEKIAKEARDRTAQDEILANLVPLDENGVPLPRALPELKSIESPLDVSVKTLDQLILDMYSNNKTEELNISEKNNVTSTFSEPSEKEDEASTTVISVISPLHTNATDSEILEHISEKSTEESSGSSGEMSGDGSDNEASGEGSGEYDASGSSGDNSGEFNSSGSSGEASEEGESSGSEDQGSGNYKMIESIESSGEFSGSSGEGSGDTASSDTSIDDKSIIRSGEGSAESVSEILQEASGEDAPTLTPTSEESTGYKIDHSGFGESSGSSGESIELRDSGEGSAEYDASGSSGDNSGDFNSSGSSGEASGVGESSGSEDQGSGNYKKIEVIESSGDYEFSGSSNESIEQSKEGSAASIYEILQAASGEDTPTLTLLSEDSTGY</sequence>
<proteinExistence type="evidence at protein level"/>
<dbReference type="EMBL" id="DQ340626">
    <property type="protein sequence ID" value="ABC65814.1"/>
    <property type="molecule type" value="mRNA"/>
</dbReference>
<dbReference type="EMBL" id="FO080493">
    <property type="protein sequence ID" value="CCD64120.1"/>
    <property type="molecule type" value="Genomic_DNA"/>
</dbReference>
<dbReference type="PIR" id="T32155">
    <property type="entry name" value="T32155"/>
</dbReference>
<dbReference type="RefSeq" id="NP_504556.3">
    <property type="nucleotide sequence ID" value="NM_072155.4"/>
</dbReference>
<dbReference type="FunCoup" id="O16883">
    <property type="interactions" value="372"/>
</dbReference>
<dbReference type="STRING" id="6239.C10F3.1.1"/>
<dbReference type="GlyCosmos" id="O16883">
    <property type="glycosylation" value="15 sites, No reported glycans"/>
</dbReference>
<dbReference type="iPTMnet" id="O16883"/>
<dbReference type="PaxDb" id="6239-C10F3.1"/>
<dbReference type="PeptideAtlas" id="O16883"/>
<dbReference type="EnsemblMetazoa" id="C10F3.1.1">
    <property type="protein sequence ID" value="C10F3.1.1"/>
    <property type="gene ID" value="WBGene00015677"/>
</dbReference>
<dbReference type="GeneID" id="178986"/>
<dbReference type="KEGG" id="cel:CELE_C10F3.1"/>
<dbReference type="UCSC" id="C10F3.1">
    <property type="organism name" value="c. elegans"/>
</dbReference>
<dbReference type="AGR" id="WB:WBGene00015677"/>
<dbReference type="CTD" id="178986"/>
<dbReference type="WormBase" id="C10F3.1">
    <property type="protein sequence ID" value="CE08066"/>
    <property type="gene ID" value="WBGene00015677"/>
    <property type="gene designation" value="cpg-4"/>
</dbReference>
<dbReference type="eggNOG" id="ENOG502S6Z7">
    <property type="taxonomic scope" value="Eukaryota"/>
</dbReference>
<dbReference type="HOGENOM" id="CLU_404523_0_0_1"/>
<dbReference type="InParanoid" id="O16883"/>
<dbReference type="OrthoDB" id="5854862at2759"/>
<dbReference type="PRO" id="PR:O16883"/>
<dbReference type="Proteomes" id="UP000001940">
    <property type="component" value="Chromosome V"/>
</dbReference>
<dbReference type="Bgee" id="WBGene00015677">
    <property type="expression patterns" value="Expressed in germ line (C elegans) and 3 other cell types or tissues"/>
</dbReference>
<dbReference type="InterPro" id="IPR029153">
    <property type="entry name" value="CPG4"/>
</dbReference>
<dbReference type="InterPro" id="IPR053123">
    <property type="entry name" value="CPG4-like"/>
</dbReference>
<dbReference type="PANTHER" id="PTHR37442:SF2">
    <property type="entry name" value="CHONDROITIN PROTEOGLYCAN 4"/>
    <property type="match status" value="1"/>
</dbReference>
<dbReference type="PANTHER" id="PTHR37442">
    <property type="entry name" value="F18A1.7 PROTEIN-RELATED"/>
    <property type="match status" value="1"/>
</dbReference>
<dbReference type="Pfam" id="PF15481">
    <property type="entry name" value="CPG4"/>
    <property type="match status" value="1"/>
</dbReference>